<reference key="1">
    <citation type="journal article" date="1996" name="Biochem. J.">
        <title>Toxic peptides and genes encoding toxin gamma of the Brazilian scorpions Tityus bahiensis and Tityus stigmurus.</title>
        <authorList>
            <person name="Becerril B."/>
            <person name="Corona M."/>
            <person name="Coronas F.I."/>
            <person name="Zamudio F.Z."/>
            <person name="Calderon-Aranda E.S."/>
            <person name="Fletcher P.L. Jr."/>
            <person name="Martin B.M."/>
            <person name="Possani L.D."/>
        </authorList>
    </citation>
    <scope>NUCLEOTIDE SEQUENCE [GENOMIC DNA]</scope>
    <scope>PROTEIN SEQUENCE OF 20-81</scope>
    <scope>AMIDATION AT CYS-81</scope>
    <scope>BIOASSAY</scope>
    <source>
        <tissue>Venom</tissue>
        <tissue>Venom gland</tissue>
    </source>
</reference>
<reference key="2">
    <citation type="journal article" date="2007" name="Comp. Biochem. Physiol.">
        <title>Proteomic analysis of the venom from the scorpion Tityus stigmurus: biochemical and physiological comparison with other Tityus species.</title>
        <authorList>
            <person name="Batista C.V.F."/>
            <person name="Roman-Gonzalez S.A."/>
            <person name="Salas-Castillo S.P."/>
            <person name="Zamudio F.Z."/>
            <person name="Gomez-Lagunas F."/>
            <person name="Possani L.D."/>
        </authorList>
    </citation>
    <scope>PROTEIN SEQUENCE</scope>
    <scope>MASS SPECTROMETRY</scope>
    <source>
        <tissue>Venom</tissue>
    </source>
</reference>
<reference key="3">
    <citation type="journal article" date="2012" name="PLoS ONE">
        <title>Identification and phylogenetic analysis of Tityus pachyurus and Tityus obscurus novel putative Na+-channel scorpion toxins.</title>
        <authorList>
            <person name="Guerrero-Vargas J.A."/>
            <person name="Mourao C.B."/>
            <person name="Quintero-Hernandez V."/>
            <person name="Possani L.D."/>
            <person name="Schwartz E.F."/>
        </authorList>
    </citation>
    <scope>NOMENCLATURE</scope>
</reference>
<sequence>MKGMILFISCLLLIDIVVGGKEGYLMDHEGCKLSCFIRPSGYCGRECTLKKGSSGYCAWPACYCYGLPNWVKVWDRATNKCGKK</sequence>
<protein>
    <recommendedName>
        <fullName>Toxin Tst1</fullName>
    </recommendedName>
    <alternativeName>
        <fullName>PT-Mice-beta* NaTx6.3</fullName>
    </alternativeName>
    <alternativeName>
        <fullName>Tst-gamma</fullName>
    </alternativeName>
</protein>
<organism>
    <name type="scientific">Tityus stigmurus</name>
    <name type="common">Brazilian scorpion</name>
    <dbReference type="NCBI Taxonomy" id="50344"/>
    <lineage>
        <taxon>Eukaryota</taxon>
        <taxon>Metazoa</taxon>
        <taxon>Ecdysozoa</taxon>
        <taxon>Arthropoda</taxon>
        <taxon>Chelicerata</taxon>
        <taxon>Arachnida</taxon>
        <taxon>Scorpiones</taxon>
        <taxon>Buthida</taxon>
        <taxon>Buthoidea</taxon>
        <taxon>Buthidae</taxon>
        <taxon>Tityus</taxon>
    </lineage>
</organism>
<feature type="signal peptide" evidence="4">
    <location>
        <begin position="1"/>
        <end position="19"/>
    </location>
</feature>
<feature type="chain" id="PRO_0000035306" description="Toxin Tst1">
    <location>
        <begin position="20"/>
        <end position="81"/>
    </location>
</feature>
<feature type="domain" description="LCN-type CS-alpha/beta" evidence="2">
    <location>
        <begin position="21"/>
        <end position="82"/>
    </location>
</feature>
<feature type="modified residue" description="Cysteine amide" evidence="6">
    <location>
        <position position="81"/>
    </location>
</feature>
<feature type="disulfide bond" evidence="2">
    <location>
        <begin position="31"/>
        <end position="81"/>
    </location>
</feature>
<feature type="disulfide bond" evidence="2">
    <location>
        <begin position="35"/>
        <end position="57"/>
    </location>
</feature>
<feature type="disulfide bond" evidence="2">
    <location>
        <begin position="43"/>
        <end position="62"/>
    </location>
</feature>
<feature type="disulfide bond" evidence="2">
    <location>
        <begin position="47"/>
        <end position="64"/>
    </location>
</feature>
<name>SCX1_TITST</name>
<proteinExistence type="evidence at protein level"/>
<comment type="function">
    <text evidence="1 4">Beta toxins bind voltage-independently at site-4 of sodium channels (Nav) and shift the voltage of activation toward more negative potentials thereby affecting sodium channel activation and promoting spontaneous and repetitive firing. This toxin is active only on mammals (By similarity). Is toxic to mice (PubMed:8611151).</text>
</comment>
<comment type="subcellular location">
    <subcellularLocation>
        <location>Secreted</location>
    </subcellularLocation>
</comment>
<comment type="tissue specificity">
    <text>Expressed by the venom gland.</text>
</comment>
<comment type="domain">
    <text evidence="5">Has the structural arrangement of an alpha-helix connected to antiparallel beta-sheets by disulfide bonds (CS-alpha/beta).</text>
</comment>
<comment type="mass spectrometry"/>
<comment type="similarity">
    <text evidence="5">Belongs to the long (4 C-C) scorpion toxin superfamily. Sodium channel inhibitor family. Beta subfamily.</text>
</comment>
<keyword id="KW-0027">Amidation</keyword>
<keyword id="KW-0903">Direct protein sequencing</keyword>
<keyword id="KW-1015">Disulfide bond</keyword>
<keyword id="KW-0872">Ion channel impairing toxin</keyword>
<keyword id="KW-0528">Neurotoxin</keyword>
<keyword id="KW-0964">Secreted</keyword>
<keyword id="KW-0732">Signal</keyword>
<keyword id="KW-0800">Toxin</keyword>
<keyword id="KW-0738">Voltage-gated sodium channel impairing toxin</keyword>
<dbReference type="PIR" id="S62867">
    <property type="entry name" value="S62867"/>
</dbReference>
<dbReference type="SMR" id="P56612"/>
<dbReference type="GO" id="GO:0005576">
    <property type="term" value="C:extracellular region"/>
    <property type="evidence" value="ECO:0000314"/>
    <property type="project" value="UniProtKB"/>
</dbReference>
<dbReference type="GO" id="GO:0019871">
    <property type="term" value="F:sodium channel inhibitor activity"/>
    <property type="evidence" value="ECO:0007669"/>
    <property type="project" value="InterPro"/>
</dbReference>
<dbReference type="GO" id="GO:0090729">
    <property type="term" value="F:toxin activity"/>
    <property type="evidence" value="ECO:0000314"/>
    <property type="project" value="UniProtKB"/>
</dbReference>
<dbReference type="GO" id="GO:0051701">
    <property type="term" value="P:biological process involved in interaction with host"/>
    <property type="evidence" value="ECO:0000314"/>
    <property type="project" value="UniProtKB"/>
</dbReference>
<dbReference type="GO" id="GO:0006952">
    <property type="term" value="P:defense response"/>
    <property type="evidence" value="ECO:0007669"/>
    <property type="project" value="InterPro"/>
</dbReference>
<dbReference type="CDD" id="cd23106">
    <property type="entry name" value="neurotoxins_LC_scorpion"/>
    <property type="match status" value="1"/>
</dbReference>
<dbReference type="FunFam" id="3.30.30.10:FF:000002">
    <property type="entry name" value="Alpha-like toxin BmK-M1"/>
    <property type="match status" value="1"/>
</dbReference>
<dbReference type="Gene3D" id="3.30.30.10">
    <property type="entry name" value="Knottin, scorpion toxin-like"/>
    <property type="match status" value="1"/>
</dbReference>
<dbReference type="InterPro" id="IPR044062">
    <property type="entry name" value="LCN-type_CS_alpha_beta_dom"/>
</dbReference>
<dbReference type="InterPro" id="IPR003614">
    <property type="entry name" value="Scorpion_toxin-like"/>
</dbReference>
<dbReference type="InterPro" id="IPR036574">
    <property type="entry name" value="Scorpion_toxin-like_sf"/>
</dbReference>
<dbReference type="InterPro" id="IPR018218">
    <property type="entry name" value="Scorpion_toxinL"/>
</dbReference>
<dbReference type="InterPro" id="IPR002061">
    <property type="entry name" value="Scorpion_toxinL/defensin"/>
</dbReference>
<dbReference type="Pfam" id="PF00537">
    <property type="entry name" value="Toxin_3"/>
    <property type="match status" value="1"/>
</dbReference>
<dbReference type="PRINTS" id="PR00285">
    <property type="entry name" value="SCORPNTOXIN"/>
</dbReference>
<dbReference type="SMART" id="SM00505">
    <property type="entry name" value="Knot1"/>
    <property type="match status" value="1"/>
</dbReference>
<dbReference type="SUPFAM" id="SSF57095">
    <property type="entry name" value="Scorpion toxin-like"/>
    <property type="match status" value="1"/>
</dbReference>
<dbReference type="PROSITE" id="PS51863">
    <property type="entry name" value="LCN_CSAB"/>
    <property type="match status" value="1"/>
</dbReference>
<evidence type="ECO:0000250" key="1"/>
<evidence type="ECO:0000255" key="2">
    <source>
        <dbReference type="PROSITE-ProRule" id="PRU01210"/>
    </source>
</evidence>
<evidence type="ECO:0000269" key="3">
    <source>
    </source>
</evidence>
<evidence type="ECO:0000269" key="4">
    <source>
    </source>
</evidence>
<evidence type="ECO:0000305" key="5"/>
<evidence type="ECO:0000305" key="6">
    <source>
    </source>
</evidence>
<accession>P56612</accession>